<feature type="chain" id="PRO_1000195211" description="Holliday junction branch migration complex subunit RuvB">
    <location>
        <begin position="1"/>
        <end position="350"/>
    </location>
</feature>
<feature type="region of interest" description="Large ATPase domain (RuvB-L)" evidence="1">
    <location>
        <begin position="1"/>
        <end position="183"/>
    </location>
</feature>
<feature type="region of interest" description="Small ATPAse domain (RuvB-S)" evidence="1">
    <location>
        <begin position="184"/>
        <end position="254"/>
    </location>
</feature>
<feature type="region of interest" description="Head domain (RuvB-H)" evidence="1">
    <location>
        <begin position="257"/>
        <end position="350"/>
    </location>
</feature>
<feature type="region of interest" description="Disordered" evidence="2">
    <location>
        <begin position="331"/>
        <end position="350"/>
    </location>
</feature>
<feature type="binding site" evidence="1">
    <location>
        <position position="22"/>
    </location>
    <ligand>
        <name>ATP</name>
        <dbReference type="ChEBI" id="CHEBI:30616"/>
    </ligand>
</feature>
<feature type="binding site" evidence="1">
    <location>
        <position position="23"/>
    </location>
    <ligand>
        <name>ATP</name>
        <dbReference type="ChEBI" id="CHEBI:30616"/>
    </ligand>
</feature>
<feature type="binding site" evidence="1">
    <location>
        <position position="64"/>
    </location>
    <ligand>
        <name>ATP</name>
        <dbReference type="ChEBI" id="CHEBI:30616"/>
    </ligand>
</feature>
<feature type="binding site" evidence="1">
    <location>
        <position position="67"/>
    </location>
    <ligand>
        <name>ATP</name>
        <dbReference type="ChEBI" id="CHEBI:30616"/>
    </ligand>
</feature>
<feature type="binding site" evidence="1">
    <location>
        <position position="68"/>
    </location>
    <ligand>
        <name>ATP</name>
        <dbReference type="ChEBI" id="CHEBI:30616"/>
    </ligand>
</feature>
<feature type="binding site" evidence="1">
    <location>
        <position position="68"/>
    </location>
    <ligand>
        <name>Mg(2+)</name>
        <dbReference type="ChEBI" id="CHEBI:18420"/>
    </ligand>
</feature>
<feature type="binding site" evidence="1">
    <location>
        <position position="69"/>
    </location>
    <ligand>
        <name>ATP</name>
        <dbReference type="ChEBI" id="CHEBI:30616"/>
    </ligand>
</feature>
<feature type="binding site" evidence="1">
    <location>
        <begin position="130"/>
        <end position="132"/>
    </location>
    <ligand>
        <name>ATP</name>
        <dbReference type="ChEBI" id="CHEBI:30616"/>
    </ligand>
</feature>
<feature type="binding site" evidence="1">
    <location>
        <position position="173"/>
    </location>
    <ligand>
        <name>ATP</name>
        <dbReference type="ChEBI" id="CHEBI:30616"/>
    </ligand>
</feature>
<feature type="binding site" evidence="1">
    <location>
        <position position="183"/>
    </location>
    <ligand>
        <name>ATP</name>
        <dbReference type="ChEBI" id="CHEBI:30616"/>
    </ligand>
</feature>
<feature type="binding site" evidence="1">
    <location>
        <position position="220"/>
    </location>
    <ligand>
        <name>ATP</name>
        <dbReference type="ChEBI" id="CHEBI:30616"/>
    </ligand>
</feature>
<feature type="binding site" evidence="1">
    <location>
        <position position="312"/>
    </location>
    <ligand>
        <name>DNA</name>
        <dbReference type="ChEBI" id="CHEBI:16991"/>
    </ligand>
</feature>
<feature type="binding site" evidence="1">
    <location>
        <position position="317"/>
    </location>
    <ligand>
        <name>DNA</name>
        <dbReference type="ChEBI" id="CHEBI:16991"/>
    </ligand>
</feature>
<gene>
    <name evidence="1" type="primary">ruvB</name>
    <name type="ordered locus">Chy400_3332</name>
</gene>
<keyword id="KW-0067">ATP-binding</keyword>
<keyword id="KW-0963">Cytoplasm</keyword>
<keyword id="KW-0227">DNA damage</keyword>
<keyword id="KW-0233">DNA recombination</keyword>
<keyword id="KW-0234">DNA repair</keyword>
<keyword id="KW-0238">DNA-binding</keyword>
<keyword id="KW-0378">Hydrolase</keyword>
<keyword id="KW-0547">Nucleotide-binding</keyword>
<proteinExistence type="inferred from homology"/>
<dbReference type="EC" id="3.6.4.-" evidence="1"/>
<dbReference type="EMBL" id="CP001364">
    <property type="protein sequence ID" value="ACM54709.1"/>
    <property type="molecule type" value="Genomic_DNA"/>
</dbReference>
<dbReference type="SMR" id="B9LBR4"/>
<dbReference type="KEGG" id="chl:Chy400_3332"/>
<dbReference type="HOGENOM" id="CLU_055599_1_0_0"/>
<dbReference type="OrthoDB" id="9804478at2"/>
<dbReference type="GO" id="GO:0005737">
    <property type="term" value="C:cytoplasm"/>
    <property type="evidence" value="ECO:0007669"/>
    <property type="project" value="UniProtKB-SubCell"/>
</dbReference>
<dbReference type="GO" id="GO:0048476">
    <property type="term" value="C:Holliday junction resolvase complex"/>
    <property type="evidence" value="ECO:0007669"/>
    <property type="project" value="UniProtKB-UniRule"/>
</dbReference>
<dbReference type="GO" id="GO:0005524">
    <property type="term" value="F:ATP binding"/>
    <property type="evidence" value="ECO:0007669"/>
    <property type="project" value="UniProtKB-UniRule"/>
</dbReference>
<dbReference type="GO" id="GO:0016887">
    <property type="term" value="F:ATP hydrolysis activity"/>
    <property type="evidence" value="ECO:0007669"/>
    <property type="project" value="InterPro"/>
</dbReference>
<dbReference type="GO" id="GO:0000400">
    <property type="term" value="F:four-way junction DNA binding"/>
    <property type="evidence" value="ECO:0007669"/>
    <property type="project" value="UniProtKB-UniRule"/>
</dbReference>
<dbReference type="GO" id="GO:0009378">
    <property type="term" value="F:four-way junction helicase activity"/>
    <property type="evidence" value="ECO:0007669"/>
    <property type="project" value="InterPro"/>
</dbReference>
<dbReference type="GO" id="GO:0006310">
    <property type="term" value="P:DNA recombination"/>
    <property type="evidence" value="ECO:0007669"/>
    <property type="project" value="UniProtKB-UniRule"/>
</dbReference>
<dbReference type="GO" id="GO:0006281">
    <property type="term" value="P:DNA repair"/>
    <property type="evidence" value="ECO:0007669"/>
    <property type="project" value="UniProtKB-UniRule"/>
</dbReference>
<dbReference type="CDD" id="cd00009">
    <property type="entry name" value="AAA"/>
    <property type="match status" value="1"/>
</dbReference>
<dbReference type="Gene3D" id="1.10.8.60">
    <property type="match status" value="1"/>
</dbReference>
<dbReference type="Gene3D" id="3.40.50.300">
    <property type="entry name" value="P-loop containing nucleotide triphosphate hydrolases"/>
    <property type="match status" value="1"/>
</dbReference>
<dbReference type="Gene3D" id="1.10.10.10">
    <property type="entry name" value="Winged helix-like DNA-binding domain superfamily/Winged helix DNA-binding domain"/>
    <property type="match status" value="1"/>
</dbReference>
<dbReference type="HAMAP" id="MF_00016">
    <property type="entry name" value="DNA_HJ_migration_RuvB"/>
    <property type="match status" value="1"/>
</dbReference>
<dbReference type="InterPro" id="IPR003593">
    <property type="entry name" value="AAA+_ATPase"/>
</dbReference>
<dbReference type="InterPro" id="IPR041445">
    <property type="entry name" value="AAA_lid_4"/>
</dbReference>
<dbReference type="InterPro" id="IPR004605">
    <property type="entry name" value="DNA_helicase_Holl-junc_RuvB"/>
</dbReference>
<dbReference type="InterPro" id="IPR027417">
    <property type="entry name" value="P-loop_NTPase"/>
</dbReference>
<dbReference type="InterPro" id="IPR008824">
    <property type="entry name" value="RuvB-like_N"/>
</dbReference>
<dbReference type="InterPro" id="IPR008823">
    <property type="entry name" value="RuvB_C"/>
</dbReference>
<dbReference type="InterPro" id="IPR036388">
    <property type="entry name" value="WH-like_DNA-bd_sf"/>
</dbReference>
<dbReference type="InterPro" id="IPR036390">
    <property type="entry name" value="WH_DNA-bd_sf"/>
</dbReference>
<dbReference type="NCBIfam" id="NF000868">
    <property type="entry name" value="PRK00080.1"/>
    <property type="match status" value="1"/>
</dbReference>
<dbReference type="NCBIfam" id="TIGR00635">
    <property type="entry name" value="ruvB"/>
    <property type="match status" value="1"/>
</dbReference>
<dbReference type="PANTHER" id="PTHR42848">
    <property type="match status" value="1"/>
</dbReference>
<dbReference type="PANTHER" id="PTHR42848:SF1">
    <property type="entry name" value="HOLLIDAY JUNCTION BRANCH MIGRATION COMPLEX SUBUNIT RUVB"/>
    <property type="match status" value="1"/>
</dbReference>
<dbReference type="Pfam" id="PF17864">
    <property type="entry name" value="AAA_lid_4"/>
    <property type="match status" value="1"/>
</dbReference>
<dbReference type="Pfam" id="PF05491">
    <property type="entry name" value="RuvB_C"/>
    <property type="match status" value="1"/>
</dbReference>
<dbReference type="Pfam" id="PF05496">
    <property type="entry name" value="RuvB_N"/>
    <property type="match status" value="1"/>
</dbReference>
<dbReference type="SMART" id="SM00382">
    <property type="entry name" value="AAA"/>
    <property type="match status" value="1"/>
</dbReference>
<dbReference type="SUPFAM" id="SSF52540">
    <property type="entry name" value="P-loop containing nucleoside triphosphate hydrolases"/>
    <property type="match status" value="1"/>
</dbReference>
<dbReference type="SUPFAM" id="SSF46785">
    <property type="entry name" value="Winged helix' DNA-binding domain"/>
    <property type="match status" value="1"/>
</dbReference>
<protein>
    <recommendedName>
        <fullName evidence="1">Holliday junction branch migration complex subunit RuvB</fullName>
        <ecNumber evidence="1">3.6.4.-</ecNumber>
    </recommendedName>
</protein>
<reference key="1">
    <citation type="submission" date="2009-01" db="EMBL/GenBank/DDBJ databases">
        <title>Complete sequence of Chloroflexus sp. Y-400-fl.</title>
        <authorList>
            <consortium name="US DOE Joint Genome Institute"/>
            <person name="Lucas S."/>
            <person name="Copeland A."/>
            <person name="Lapidus A."/>
            <person name="Glavina del Rio T."/>
            <person name="Dalin E."/>
            <person name="Tice H."/>
            <person name="Bruce D."/>
            <person name="Goodwin L."/>
            <person name="Pitluck S."/>
            <person name="Sims D."/>
            <person name="Kiss H."/>
            <person name="Brettin T."/>
            <person name="Detter J.C."/>
            <person name="Han C."/>
            <person name="Larimer F."/>
            <person name="Land M."/>
            <person name="Hauser L."/>
            <person name="Kyrpides N."/>
            <person name="Ovchinnikova G."/>
            <person name="Bryant D.A."/>
            <person name="Richardson P."/>
        </authorList>
    </citation>
    <scope>NUCLEOTIDE SEQUENCE [LARGE SCALE GENOMIC DNA]</scope>
    <source>
        <strain>ATCC 29364 / DSM 637 / Y-400-fl</strain>
    </source>
</reference>
<name>RUVB_CHLSY</name>
<comment type="function">
    <text evidence="1">The RuvA-RuvB-RuvC complex processes Holliday junction (HJ) DNA during genetic recombination and DNA repair, while the RuvA-RuvB complex plays an important role in the rescue of blocked DNA replication forks via replication fork reversal (RFR). RuvA specifically binds to HJ cruciform DNA, conferring on it an open structure. The RuvB hexamer acts as an ATP-dependent pump, pulling dsDNA into and through the RuvAB complex. RuvB forms 2 homohexamers on either side of HJ DNA bound by 1 or 2 RuvA tetramers; 4 subunits per hexamer contact DNA at a time. Coordinated motions by a converter formed by DNA-disengaged RuvB subunits stimulates ATP hydrolysis and nucleotide exchange. Immobilization of the converter enables RuvB to convert the ATP-contained energy into a lever motion, pulling 2 nucleotides of DNA out of the RuvA tetramer per ATP hydrolyzed, thus driving DNA branch migration. The RuvB motors rotate together with the DNA substrate, which together with the progressing nucleotide cycle form the mechanistic basis for DNA recombination by continuous HJ branch migration. Branch migration allows RuvC to scan DNA until it finds its consensus sequence, where it cleaves and resolves cruciform DNA.</text>
</comment>
<comment type="catalytic activity">
    <reaction evidence="1">
        <text>ATP + H2O = ADP + phosphate + H(+)</text>
        <dbReference type="Rhea" id="RHEA:13065"/>
        <dbReference type="ChEBI" id="CHEBI:15377"/>
        <dbReference type="ChEBI" id="CHEBI:15378"/>
        <dbReference type="ChEBI" id="CHEBI:30616"/>
        <dbReference type="ChEBI" id="CHEBI:43474"/>
        <dbReference type="ChEBI" id="CHEBI:456216"/>
    </reaction>
</comment>
<comment type="subunit">
    <text evidence="1">Homohexamer. Forms an RuvA(8)-RuvB(12)-Holliday junction (HJ) complex. HJ DNA is sandwiched between 2 RuvA tetramers; dsDNA enters through RuvA and exits via RuvB. An RuvB hexamer assembles on each DNA strand where it exits the tetramer. Each RuvB hexamer is contacted by two RuvA subunits (via domain III) on 2 adjacent RuvB subunits; this complex drives branch migration. In the full resolvosome a probable DNA-RuvA(4)-RuvB(12)-RuvC(2) complex forms which resolves the HJ.</text>
</comment>
<comment type="subcellular location">
    <subcellularLocation>
        <location evidence="1">Cytoplasm</location>
    </subcellularLocation>
</comment>
<comment type="domain">
    <text evidence="1">Has 3 domains, the large (RuvB-L) and small ATPase (RuvB-S) domains and the C-terminal head (RuvB-H) domain. The head domain binds DNA, while the ATPase domains jointly bind ATP, ADP or are empty depending on the state of the subunit in the translocation cycle. During a single DNA translocation step the structure of each domain remains the same, but their relative positions change.</text>
</comment>
<comment type="similarity">
    <text evidence="1">Belongs to the RuvB family.</text>
</comment>
<sequence>MSAERLVNPHSDSDDQQVEKSLRPRTLSEFIGQEKVVEQLRIAIAAARGRNESLDHTLFYGPPGLGKTSLANVVANEMGAKIKITSGPAIERAGDLAAILTNLQANDVLFIDEVHRLNRAVEEVLYPAMEDFALDLVVGKGPGARSLRLNLPRFTVIGATTRLALLTSPLRDRFVAVHRLVFYSDDAMTEIVSRSARILGVPISPEGAREIGRRARGTPRIANRILRRVRDYAQVVADGAITLQVARDALAQLEIDELGLDENDRRLLRAIIELFNGGPVGLSTLAAALAEEVDAIEDVYEPFLLQLGFLQRTPRGRIATRRAYEHLGLPYPERTLPADDESGPQQATLF</sequence>
<accession>B9LBR4</accession>
<organism>
    <name type="scientific">Chloroflexus aurantiacus (strain ATCC 29364 / DSM 637 / Y-400-fl)</name>
    <dbReference type="NCBI Taxonomy" id="480224"/>
    <lineage>
        <taxon>Bacteria</taxon>
        <taxon>Bacillati</taxon>
        <taxon>Chloroflexota</taxon>
        <taxon>Chloroflexia</taxon>
        <taxon>Chloroflexales</taxon>
        <taxon>Chloroflexineae</taxon>
        <taxon>Chloroflexaceae</taxon>
        <taxon>Chloroflexus</taxon>
    </lineage>
</organism>
<evidence type="ECO:0000255" key="1">
    <source>
        <dbReference type="HAMAP-Rule" id="MF_00016"/>
    </source>
</evidence>
<evidence type="ECO:0000256" key="2">
    <source>
        <dbReference type="SAM" id="MobiDB-lite"/>
    </source>
</evidence>